<gene>
    <name evidence="1" type="primary">yhaM</name>
    <name type="ordered locus">E2348C_3400</name>
</gene>
<evidence type="ECO:0000255" key="1">
    <source>
        <dbReference type="HAMAP-Rule" id="MF_01845"/>
    </source>
</evidence>
<reference key="1">
    <citation type="journal article" date="2009" name="J. Bacteriol.">
        <title>Complete genome sequence and comparative genome analysis of enteropathogenic Escherichia coli O127:H6 strain E2348/69.</title>
        <authorList>
            <person name="Iguchi A."/>
            <person name="Thomson N.R."/>
            <person name="Ogura Y."/>
            <person name="Saunders D."/>
            <person name="Ooka T."/>
            <person name="Henderson I.R."/>
            <person name="Harris D."/>
            <person name="Asadulghani M."/>
            <person name="Kurokawa K."/>
            <person name="Dean P."/>
            <person name="Kenny B."/>
            <person name="Quail M.A."/>
            <person name="Thurston S."/>
            <person name="Dougan G."/>
            <person name="Hayashi T."/>
            <person name="Parkhill J."/>
            <person name="Frankel G."/>
        </authorList>
    </citation>
    <scope>NUCLEOTIDE SEQUENCE [LARGE SCALE GENOMIC DNA]</scope>
    <source>
        <strain>E2348/69 / EPEC</strain>
    </source>
</reference>
<proteinExistence type="inferred from homology"/>
<organism>
    <name type="scientific">Escherichia coli O127:H6 (strain E2348/69 / EPEC)</name>
    <dbReference type="NCBI Taxonomy" id="574521"/>
    <lineage>
        <taxon>Bacteria</taxon>
        <taxon>Pseudomonadati</taxon>
        <taxon>Pseudomonadota</taxon>
        <taxon>Gammaproteobacteria</taxon>
        <taxon>Enterobacterales</taxon>
        <taxon>Enterobacteriaceae</taxon>
        <taxon>Escherichia</taxon>
    </lineage>
</organism>
<feature type="chain" id="PRO_1000188450" description="UPF0597 protein YhaM">
    <location>
        <begin position="1"/>
        <end position="436"/>
    </location>
</feature>
<sequence length="436" mass="45376">MFDSTLNPLWQRYILAVQEEVKPALGCTEPISLALAAAVAAAELEGPVERVEAWVSPNLMKNGLGVTVPGTGMVGLPIAAALGALGGNANAGLEVLKDATAQAIADAKALLAAGKVSVKIQEPCDEILFSRAKVWNGEKWACVTIVGGHTNIVHIETHNGVVFTQQACVTEGEQESPLTVLSRTTLAEILKFVNEVPFAAIRFILDSAKLNCALSQEGLSGNWGLHIGATLEKQCERGLLAKDLSSSIVIRTSAASDARMGGATLPAMSNSGSGNQGITATMPVVVVAEHFGADDERLARALMLSHLSAIYIHNQLPRLSALCAATTAAMGAAAGMAWLVDGRYETISMAISSMIGDVSGMICDGASNSCAMKVSTSASAAWKAVLMALDDTAVTGNEGIVAHDVEQSIANLCALASHSMQQTDRQIIEIMASKAR</sequence>
<accession>B7UJ14</accession>
<keyword id="KW-1185">Reference proteome</keyword>
<name>YHAM_ECO27</name>
<comment type="similarity">
    <text evidence="1">Belongs to the UPF0597 family.</text>
</comment>
<protein>
    <recommendedName>
        <fullName evidence="1">UPF0597 protein YhaM</fullName>
    </recommendedName>
</protein>
<dbReference type="EMBL" id="FM180568">
    <property type="protein sequence ID" value="CAS10948.1"/>
    <property type="molecule type" value="Genomic_DNA"/>
</dbReference>
<dbReference type="KEGG" id="ecg:E2348C_3400"/>
<dbReference type="HOGENOM" id="CLU_051840_0_0_6"/>
<dbReference type="Proteomes" id="UP000008205">
    <property type="component" value="Chromosome"/>
</dbReference>
<dbReference type="GO" id="GO:0080146">
    <property type="term" value="F:L-cysteine desulfhydrase activity"/>
    <property type="evidence" value="ECO:0007669"/>
    <property type="project" value="TreeGrafter"/>
</dbReference>
<dbReference type="GO" id="GO:0019450">
    <property type="term" value="P:L-cysteine catabolic process to pyruvate"/>
    <property type="evidence" value="ECO:0007669"/>
    <property type="project" value="TreeGrafter"/>
</dbReference>
<dbReference type="HAMAP" id="MF_01845">
    <property type="entry name" value="UPF0597"/>
    <property type="match status" value="1"/>
</dbReference>
<dbReference type="InterPro" id="IPR005130">
    <property type="entry name" value="Ser_deHydtase-like_asu"/>
</dbReference>
<dbReference type="InterPro" id="IPR021144">
    <property type="entry name" value="UPF0597"/>
</dbReference>
<dbReference type="PANTHER" id="PTHR30501">
    <property type="entry name" value="UPF0597 PROTEIN YHAM"/>
    <property type="match status" value="1"/>
</dbReference>
<dbReference type="PANTHER" id="PTHR30501:SF2">
    <property type="entry name" value="UPF0597 PROTEIN YHAM"/>
    <property type="match status" value="1"/>
</dbReference>
<dbReference type="Pfam" id="PF03313">
    <property type="entry name" value="SDH_alpha"/>
    <property type="match status" value="1"/>
</dbReference>
<dbReference type="PIRSF" id="PIRSF006054">
    <property type="entry name" value="UCP006054"/>
    <property type="match status" value="1"/>
</dbReference>